<keyword id="KW-0963">Cytoplasm</keyword>
<keyword id="KW-0342">GTP-binding</keyword>
<keyword id="KW-0436">Ligase</keyword>
<keyword id="KW-0460">Magnesium</keyword>
<keyword id="KW-0479">Metal-binding</keyword>
<keyword id="KW-0547">Nucleotide-binding</keyword>
<keyword id="KW-0658">Purine biosynthesis</keyword>
<name>PURA_LACLM</name>
<evidence type="ECO:0000255" key="1">
    <source>
        <dbReference type="HAMAP-Rule" id="MF_00011"/>
    </source>
</evidence>
<protein>
    <recommendedName>
        <fullName evidence="1">Adenylosuccinate synthetase</fullName>
        <shortName evidence="1">AMPSase</shortName>
        <shortName evidence="1">AdSS</shortName>
        <ecNumber evidence="1">6.3.4.4</ecNumber>
    </recommendedName>
    <alternativeName>
        <fullName evidence="1">IMP--aspartate ligase</fullName>
    </alternativeName>
</protein>
<reference key="1">
    <citation type="journal article" date="2007" name="J. Bacteriol.">
        <title>The complete genome sequence of the lactic acid bacterial paradigm Lactococcus lactis subsp. cremoris MG1363.</title>
        <authorList>
            <person name="Wegmann U."/>
            <person name="O'Connell-Motherway M."/>
            <person name="Zomer A."/>
            <person name="Buist G."/>
            <person name="Shearman C."/>
            <person name="Canchaya C."/>
            <person name="Ventura M."/>
            <person name="Goesmann A."/>
            <person name="Gasson M.J."/>
            <person name="Kuipers O.P."/>
            <person name="van Sinderen D."/>
            <person name="Kok J."/>
        </authorList>
    </citation>
    <scope>NUCLEOTIDE SEQUENCE [LARGE SCALE GENOMIC DNA]</scope>
    <source>
        <strain>MG1363</strain>
    </source>
</reference>
<feature type="chain" id="PRO_1000000845" description="Adenylosuccinate synthetase">
    <location>
        <begin position="1"/>
        <end position="430"/>
    </location>
</feature>
<feature type="active site" description="Proton acceptor" evidence="1">
    <location>
        <position position="13"/>
    </location>
</feature>
<feature type="active site" description="Proton donor" evidence="1">
    <location>
        <position position="41"/>
    </location>
</feature>
<feature type="binding site" evidence="1">
    <location>
        <begin position="12"/>
        <end position="18"/>
    </location>
    <ligand>
        <name>GTP</name>
        <dbReference type="ChEBI" id="CHEBI:37565"/>
    </ligand>
</feature>
<feature type="binding site" description="in other chain" evidence="1">
    <location>
        <begin position="13"/>
        <end position="16"/>
    </location>
    <ligand>
        <name>IMP</name>
        <dbReference type="ChEBI" id="CHEBI:58053"/>
        <note>ligand shared between dimeric partners</note>
    </ligand>
</feature>
<feature type="binding site" evidence="1">
    <location>
        <position position="13"/>
    </location>
    <ligand>
        <name>Mg(2+)</name>
        <dbReference type="ChEBI" id="CHEBI:18420"/>
    </ligand>
</feature>
<feature type="binding site" description="in other chain" evidence="1">
    <location>
        <begin position="38"/>
        <end position="41"/>
    </location>
    <ligand>
        <name>IMP</name>
        <dbReference type="ChEBI" id="CHEBI:58053"/>
        <note>ligand shared between dimeric partners</note>
    </ligand>
</feature>
<feature type="binding site" evidence="1">
    <location>
        <begin position="40"/>
        <end position="42"/>
    </location>
    <ligand>
        <name>GTP</name>
        <dbReference type="ChEBI" id="CHEBI:37565"/>
    </ligand>
</feature>
<feature type="binding site" evidence="1">
    <location>
        <position position="40"/>
    </location>
    <ligand>
        <name>Mg(2+)</name>
        <dbReference type="ChEBI" id="CHEBI:18420"/>
    </ligand>
</feature>
<feature type="binding site" description="in other chain" evidence="1">
    <location>
        <position position="128"/>
    </location>
    <ligand>
        <name>IMP</name>
        <dbReference type="ChEBI" id="CHEBI:58053"/>
        <note>ligand shared between dimeric partners</note>
    </ligand>
</feature>
<feature type="binding site" evidence="1">
    <location>
        <position position="142"/>
    </location>
    <ligand>
        <name>IMP</name>
        <dbReference type="ChEBI" id="CHEBI:58053"/>
        <note>ligand shared between dimeric partners</note>
    </ligand>
</feature>
<feature type="binding site" description="in other chain" evidence="1">
    <location>
        <position position="223"/>
    </location>
    <ligand>
        <name>IMP</name>
        <dbReference type="ChEBI" id="CHEBI:58053"/>
        <note>ligand shared between dimeric partners</note>
    </ligand>
</feature>
<feature type="binding site" description="in other chain" evidence="1">
    <location>
        <position position="238"/>
    </location>
    <ligand>
        <name>IMP</name>
        <dbReference type="ChEBI" id="CHEBI:58053"/>
        <note>ligand shared between dimeric partners</note>
    </ligand>
</feature>
<feature type="binding site" evidence="1">
    <location>
        <begin position="298"/>
        <end position="304"/>
    </location>
    <ligand>
        <name>substrate</name>
    </ligand>
</feature>
<feature type="binding site" description="in other chain" evidence="1">
    <location>
        <position position="302"/>
    </location>
    <ligand>
        <name>IMP</name>
        <dbReference type="ChEBI" id="CHEBI:58053"/>
        <note>ligand shared between dimeric partners</note>
    </ligand>
</feature>
<feature type="binding site" evidence="1">
    <location>
        <position position="304"/>
    </location>
    <ligand>
        <name>GTP</name>
        <dbReference type="ChEBI" id="CHEBI:37565"/>
    </ligand>
</feature>
<feature type="binding site" evidence="1">
    <location>
        <begin position="330"/>
        <end position="332"/>
    </location>
    <ligand>
        <name>GTP</name>
        <dbReference type="ChEBI" id="CHEBI:37565"/>
    </ligand>
</feature>
<feature type="binding site" evidence="1">
    <location>
        <begin position="413"/>
        <end position="415"/>
    </location>
    <ligand>
        <name>GTP</name>
        <dbReference type="ChEBI" id="CHEBI:37565"/>
    </ligand>
</feature>
<comment type="function">
    <text evidence="1">Plays an important role in the de novo pathway of purine nucleotide biosynthesis. Catalyzes the first committed step in the biosynthesis of AMP from IMP.</text>
</comment>
<comment type="catalytic activity">
    <reaction evidence="1">
        <text>IMP + L-aspartate + GTP = N(6)-(1,2-dicarboxyethyl)-AMP + GDP + phosphate + 2 H(+)</text>
        <dbReference type="Rhea" id="RHEA:15753"/>
        <dbReference type="ChEBI" id="CHEBI:15378"/>
        <dbReference type="ChEBI" id="CHEBI:29991"/>
        <dbReference type="ChEBI" id="CHEBI:37565"/>
        <dbReference type="ChEBI" id="CHEBI:43474"/>
        <dbReference type="ChEBI" id="CHEBI:57567"/>
        <dbReference type="ChEBI" id="CHEBI:58053"/>
        <dbReference type="ChEBI" id="CHEBI:58189"/>
        <dbReference type="EC" id="6.3.4.4"/>
    </reaction>
</comment>
<comment type="cofactor">
    <cofactor evidence="1">
        <name>Mg(2+)</name>
        <dbReference type="ChEBI" id="CHEBI:18420"/>
    </cofactor>
    <text evidence="1">Binds 1 Mg(2+) ion per subunit.</text>
</comment>
<comment type="pathway">
    <text evidence="1">Purine metabolism; AMP biosynthesis via de novo pathway; AMP from IMP: step 1/2.</text>
</comment>
<comment type="subunit">
    <text evidence="1">Homodimer.</text>
</comment>
<comment type="subcellular location">
    <subcellularLocation>
        <location evidence="1">Cytoplasm</location>
    </subcellularLocation>
</comment>
<comment type="similarity">
    <text evidence="1">Belongs to the adenylosuccinate synthetase family.</text>
</comment>
<dbReference type="EC" id="6.3.4.4" evidence="1"/>
<dbReference type="EMBL" id="AM406671">
    <property type="protein sequence ID" value="CAL98768.1"/>
    <property type="molecule type" value="Genomic_DNA"/>
</dbReference>
<dbReference type="RefSeq" id="WP_011835894.1">
    <property type="nucleotide sequence ID" value="NC_009004.1"/>
</dbReference>
<dbReference type="SMR" id="A2RN80"/>
<dbReference type="STRING" id="416870.llmg_2201"/>
<dbReference type="KEGG" id="llm:llmg_2201"/>
<dbReference type="eggNOG" id="COG0104">
    <property type="taxonomic scope" value="Bacteria"/>
</dbReference>
<dbReference type="HOGENOM" id="CLU_029848_0_0_9"/>
<dbReference type="OrthoDB" id="9807553at2"/>
<dbReference type="PhylomeDB" id="A2RN80"/>
<dbReference type="UniPathway" id="UPA00075">
    <property type="reaction ID" value="UER00335"/>
</dbReference>
<dbReference type="Proteomes" id="UP000000364">
    <property type="component" value="Chromosome"/>
</dbReference>
<dbReference type="GO" id="GO:0005737">
    <property type="term" value="C:cytoplasm"/>
    <property type="evidence" value="ECO:0007669"/>
    <property type="project" value="UniProtKB-SubCell"/>
</dbReference>
<dbReference type="GO" id="GO:0004019">
    <property type="term" value="F:adenylosuccinate synthase activity"/>
    <property type="evidence" value="ECO:0007669"/>
    <property type="project" value="UniProtKB-UniRule"/>
</dbReference>
<dbReference type="GO" id="GO:0005525">
    <property type="term" value="F:GTP binding"/>
    <property type="evidence" value="ECO:0007669"/>
    <property type="project" value="UniProtKB-UniRule"/>
</dbReference>
<dbReference type="GO" id="GO:0000287">
    <property type="term" value="F:magnesium ion binding"/>
    <property type="evidence" value="ECO:0007669"/>
    <property type="project" value="UniProtKB-UniRule"/>
</dbReference>
<dbReference type="GO" id="GO:0044208">
    <property type="term" value="P:'de novo' AMP biosynthetic process"/>
    <property type="evidence" value="ECO:0007669"/>
    <property type="project" value="UniProtKB-UniRule"/>
</dbReference>
<dbReference type="GO" id="GO:0046040">
    <property type="term" value="P:IMP metabolic process"/>
    <property type="evidence" value="ECO:0007669"/>
    <property type="project" value="TreeGrafter"/>
</dbReference>
<dbReference type="CDD" id="cd03108">
    <property type="entry name" value="AdSS"/>
    <property type="match status" value="1"/>
</dbReference>
<dbReference type="FunFam" id="1.10.300.10:FF:000001">
    <property type="entry name" value="Adenylosuccinate synthetase"/>
    <property type="match status" value="1"/>
</dbReference>
<dbReference type="FunFam" id="3.90.170.10:FF:000001">
    <property type="entry name" value="Adenylosuccinate synthetase"/>
    <property type="match status" value="1"/>
</dbReference>
<dbReference type="Gene3D" id="3.40.440.10">
    <property type="entry name" value="Adenylosuccinate Synthetase, subunit A, domain 1"/>
    <property type="match status" value="1"/>
</dbReference>
<dbReference type="Gene3D" id="1.10.300.10">
    <property type="entry name" value="Adenylosuccinate Synthetase, subunit A, domain 2"/>
    <property type="match status" value="1"/>
</dbReference>
<dbReference type="Gene3D" id="3.90.170.10">
    <property type="entry name" value="Adenylosuccinate Synthetase, subunit A, domain 3"/>
    <property type="match status" value="1"/>
</dbReference>
<dbReference type="HAMAP" id="MF_00011">
    <property type="entry name" value="Adenylosucc_synth"/>
    <property type="match status" value="1"/>
</dbReference>
<dbReference type="InterPro" id="IPR018220">
    <property type="entry name" value="Adenylosuccin_syn_GTP-bd"/>
</dbReference>
<dbReference type="InterPro" id="IPR033128">
    <property type="entry name" value="Adenylosuccin_syn_Lys_AS"/>
</dbReference>
<dbReference type="InterPro" id="IPR042109">
    <property type="entry name" value="Adenylosuccinate_synth_dom1"/>
</dbReference>
<dbReference type="InterPro" id="IPR042110">
    <property type="entry name" value="Adenylosuccinate_synth_dom2"/>
</dbReference>
<dbReference type="InterPro" id="IPR042111">
    <property type="entry name" value="Adenylosuccinate_synth_dom3"/>
</dbReference>
<dbReference type="InterPro" id="IPR001114">
    <property type="entry name" value="Adenylosuccinate_synthetase"/>
</dbReference>
<dbReference type="InterPro" id="IPR027417">
    <property type="entry name" value="P-loop_NTPase"/>
</dbReference>
<dbReference type="NCBIfam" id="NF002223">
    <property type="entry name" value="PRK01117.1"/>
    <property type="match status" value="1"/>
</dbReference>
<dbReference type="NCBIfam" id="TIGR00184">
    <property type="entry name" value="purA"/>
    <property type="match status" value="1"/>
</dbReference>
<dbReference type="PANTHER" id="PTHR11846">
    <property type="entry name" value="ADENYLOSUCCINATE SYNTHETASE"/>
    <property type="match status" value="1"/>
</dbReference>
<dbReference type="PANTHER" id="PTHR11846:SF0">
    <property type="entry name" value="ADENYLOSUCCINATE SYNTHETASE"/>
    <property type="match status" value="1"/>
</dbReference>
<dbReference type="Pfam" id="PF00709">
    <property type="entry name" value="Adenylsucc_synt"/>
    <property type="match status" value="1"/>
</dbReference>
<dbReference type="SMART" id="SM00788">
    <property type="entry name" value="Adenylsucc_synt"/>
    <property type="match status" value="1"/>
</dbReference>
<dbReference type="SUPFAM" id="SSF52540">
    <property type="entry name" value="P-loop containing nucleoside triphosphate hydrolases"/>
    <property type="match status" value="1"/>
</dbReference>
<dbReference type="PROSITE" id="PS01266">
    <property type="entry name" value="ADENYLOSUCCIN_SYN_1"/>
    <property type="match status" value="1"/>
</dbReference>
<dbReference type="PROSITE" id="PS00513">
    <property type="entry name" value="ADENYLOSUCCIN_SYN_2"/>
    <property type="match status" value="1"/>
</dbReference>
<organism>
    <name type="scientific">Lactococcus lactis subsp. cremoris (strain MG1363)</name>
    <dbReference type="NCBI Taxonomy" id="416870"/>
    <lineage>
        <taxon>Bacteria</taxon>
        <taxon>Bacillati</taxon>
        <taxon>Bacillota</taxon>
        <taxon>Bacilli</taxon>
        <taxon>Lactobacillales</taxon>
        <taxon>Streptococcaceae</taxon>
        <taxon>Lactococcus</taxon>
        <taxon>Lactococcus cremoris subsp. cremoris</taxon>
    </lineage>
</organism>
<sequence length="430" mass="47353">MPSVVVVGTQWGDEGKGKITDFLSSNAEVIARYQGGDNAGHTIVIDGKKFKLHLIPSGIFFPEKISVIGNGVVVNPKSLIEEIAYLAENGVSANSLRISDRAHVILPYHKKLDFLQEEAKGDKKIGTTIKGIGPAYMDKAARVGIRIADLLDKEIFEERLRTNLEVKNREFVKMYDSEPLEFEEIFEEYYEYGQQLKKYVTDTSVILNDALDAGKRVLFEGAQGVMLDIDQGTYPFVTSSNPVAGGVTIGSGVGPSKISKVVGVCKAYTSRVGDGPFPTELFDEVGHQIREVGHEYGTTTGRPRRVGWFDSVVMRHAKRVSGLTNLSLNSIDVLSGLETVKICVAYERSNGEQITHYPASLKELADCKPIYEELPGWSEDITSCRTLEEIPEAARNYVRRVGELVGVRISTFSVGPGREQTNVLESVWGV</sequence>
<gene>
    <name evidence="1" type="primary">purA</name>
    <name type="ordered locus">llmg_2201</name>
</gene>
<proteinExistence type="inferred from homology"/>
<accession>A2RN80</accession>